<protein>
    <recommendedName>
        <fullName>Uptake hydrogenase small subunit</fullName>
        <ecNumber>1.12.99.6</ecNumber>
    </recommendedName>
    <alternativeName>
        <fullName>Hydrogenlyase</fullName>
    </alternativeName>
    <alternativeName>
        <fullName>Membrane-bound hydrogenase small subunit</fullName>
    </alternativeName>
</protein>
<comment type="function">
    <text>This enzyme recycles the H(2) produced by nitrogenase to increase the production of ATP and to protect nitrogenase against inhibition or damage by O(2) under carbon- or phosphate-limited conditions.</text>
</comment>
<comment type="catalytic activity">
    <reaction>
        <text>H2 + A = AH2</text>
        <dbReference type="Rhea" id="RHEA:12116"/>
        <dbReference type="ChEBI" id="CHEBI:13193"/>
        <dbReference type="ChEBI" id="CHEBI:17499"/>
        <dbReference type="ChEBI" id="CHEBI:18276"/>
        <dbReference type="EC" id="1.12.99.6"/>
    </reaction>
</comment>
<comment type="cofactor">
    <cofactor evidence="1">
        <name>[4Fe-4S] cluster</name>
        <dbReference type="ChEBI" id="CHEBI:49883"/>
    </cofactor>
    <text evidence="1">Binds 2 [4Fe-4S] clusters.</text>
</comment>
<comment type="cofactor">
    <cofactor evidence="1">
        <name>[3Fe-4S] cluster</name>
        <dbReference type="ChEBI" id="CHEBI:21137"/>
    </cofactor>
    <text evidence="1">Binds 1 [3Fe-4S] cluster.</text>
</comment>
<comment type="subunit">
    <text>Heterodimer of a large and a small subunit.</text>
</comment>
<comment type="subcellular location">
    <subcellularLocation>
        <location>Cell membrane</location>
        <topology>Peripheral membrane protein</topology>
    </subcellularLocation>
</comment>
<comment type="PTM">
    <text>Predicted to be exported by the Tat system. The position of the signal peptide cleavage has not been experimentally proven.</text>
</comment>
<comment type="similarity">
    <text evidence="3">Belongs to the [NiFe]/[NiFeSe] hydrogenase small subunit family.</text>
</comment>
<sequence>MIETFYEVMRRQGISRRSFLKYCSLTATSLGLSPVFVPKIVHAMETKPRTPVLWLHGLECTCCSESFIRSAHPLAKDVVLSMISLDYDDTLMAAAGHQAEAILGEVMTKYKGNYILAVEGNPPLNQDGMSCIIGGKPFIDQLRHVAKDAKAIISWGSCASWGCVQAAKANPTQATPIHKVITDKPIIKVPGCPPIAEVMTGVITYMLTFDRFPELDRQGRPKMFYSQRIHDKCYRRPHFDAGQFVESWDDESARKGYCLYKVGCKGPTTYNACSTTRWNGGTSFPIQSGHGCIGCSEDGFWDKGSFYSRLTNIHQFGIEANADSVGVTAVGVVGAATAAHAAVSAIKRARHKDAAQDTAATQK</sequence>
<dbReference type="EC" id="1.12.99.6"/>
<dbReference type="EMBL" id="S56898">
    <property type="protein sequence ID" value="AAB25779.1"/>
    <property type="molecule type" value="Genomic_DNA"/>
</dbReference>
<dbReference type="PIR" id="JH0775">
    <property type="entry name" value="JH0775"/>
</dbReference>
<dbReference type="SMR" id="P33375"/>
<dbReference type="GO" id="GO:0044569">
    <property type="term" value="C:[Ni-Fe] hydrogenase complex"/>
    <property type="evidence" value="ECO:0007669"/>
    <property type="project" value="TreeGrafter"/>
</dbReference>
<dbReference type="GO" id="GO:0009375">
    <property type="term" value="C:ferredoxin hydrogenase complex"/>
    <property type="evidence" value="ECO:0007669"/>
    <property type="project" value="InterPro"/>
</dbReference>
<dbReference type="GO" id="GO:0005886">
    <property type="term" value="C:plasma membrane"/>
    <property type="evidence" value="ECO:0007669"/>
    <property type="project" value="UniProtKB-SubCell"/>
</dbReference>
<dbReference type="GO" id="GO:0051538">
    <property type="term" value="F:3 iron, 4 sulfur cluster binding"/>
    <property type="evidence" value="ECO:0007669"/>
    <property type="project" value="UniProtKB-KW"/>
</dbReference>
<dbReference type="GO" id="GO:0051539">
    <property type="term" value="F:4 iron, 4 sulfur cluster binding"/>
    <property type="evidence" value="ECO:0007669"/>
    <property type="project" value="UniProtKB-KW"/>
</dbReference>
<dbReference type="GO" id="GO:0009055">
    <property type="term" value="F:electron transfer activity"/>
    <property type="evidence" value="ECO:0007669"/>
    <property type="project" value="TreeGrafter"/>
</dbReference>
<dbReference type="GO" id="GO:0008901">
    <property type="term" value="F:ferredoxin hydrogenase activity"/>
    <property type="evidence" value="ECO:0007669"/>
    <property type="project" value="InterPro"/>
</dbReference>
<dbReference type="GO" id="GO:0033748">
    <property type="term" value="F:hydrogenase (acceptor) activity"/>
    <property type="evidence" value="ECO:0007669"/>
    <property type="project" value="UniProtKB-EC"/>
</dbReference>
<dbReference type="GO" id="GO:0046872">
    <property type="term" value="F:metal ion binding"/>
    <property type="evidence" value="ECO:0007669"/>
    <property type="project" value="UniProtKB-KW"/>
</dbReference>
<dbReference type="GO" id="GO:0009061">
    <property type="term" value="P:anaerobic respiration"/>
    <property type="evidence" value="ECO:0007669"/>
    <property type="project" value="TreeGrafter"/>
</dbReference>
<dbReference type="FunFam" id="4.10.480.10:FF:000002">
    <property type="entry name" value="Hydrogenase-1 small chain"/>
    <property type="match status" value="1"/>
</dbReference>
<dbReference type="Gene3D" id="4.10.480.10">
    <property type="entry name" value="Cytochrome-c3 hydrogenase, C-terminal domain"/>
    <property type="match status" value="1"/>
</dbReference>
<dbReference type="Gene3D" id="3.40.50.700">
    <property type="entry name" value="NADH:ubiquinone oxidoreductase-like, 20kDa subunit"/>
    <property type="match status" value="1"/>
</dbReference>
<dbReference type="InterPro" id="IPR027394">
    <property type="entry name" value="Cytochrome-c3_hydrogenase_C"/>
</dbReference>
<dbReference type="InterPro" id="IPR006137">
    <property type="entry name" value="NADH_UbQ_OxRdtase-like_20kDa"/>
</dbReference>
<dbReference type="InterPro" id="IPR037148">
    <property type="entry name" value="NiFe-Hase_small_C_sf"/>
</dbReference>
<dbReference type="InterPro" id="IPR037024">
    <property type="entry name" value="NiFe_Hase_small_N_sf"/>
</dbReference>
<dbReference type="InterPro" id="IPR001821">
    <property type="entry name" value="NiFe_hydrogenase_ssu"/>
</dbReference>
<dbReference type="InterPro" id="IPR006311">
    <property type="entry name" value="TAT_signal"/>
</dbReference>
<dbReference type="InterPro" id="IPR019546">
    <property type="entry name" value="TAT_signal_bac_arc"/>
</dbReference>
<dbReference type="NCBIfam" id="TIGR00391">
    <property type="entry name" value="hydA"/>
    <property type="match status" value="1"/>
</dbReference>
<dbReference type="NCBIfam" id="TIGR01409">
    <property type="entry name" value="TAT_signal_seq"/>
    <property type="match status" value="1"/>
</dbReference>
<dbReference type="PANTHER" id="PTHR30013:SF6">
    <property type="entry name" value="HYDROGENASE-1 SMALL CHAIN"/>
    <property type="match status" value="1"/>
</dbReference>
<dbReference type="PANTHER" id="PTHR30013">
    <property type="entry name" value="NIFE / NIFESE HYDROGENASE SMALL SUBUNIT FAMILY MEMBER"/>
    <property type="match status" value="1"/>
</dbReference>
<dbReference type="Pfam" id="PF14720">
    <property type="entry name" value="NiFe_hyd_SSU_C"/>
    <property type="match status" value="1"/>
</dbReference>
<dbReference type="Pfam" id="PF01058">
    <property type="entry name" value="Oxidored_q6"/>
    <property type="match status" value="1"/>
</dbReference>
<dbReference type="PIRSF" id="PIRSF000310">
    <property type="entry name" value="NiFe_hyd_ssu"/>
    <property type="match status" value="1"/>
</dbReference>
<dbReference type="PRINTS" id="PR00614">
    <property type="entry name" value="NIHGNASESMLL"/>
</dbReference>
<dbReference type="SUPFAM" id="SSF56770">
    <property type="entry name" value="HydA/Nqo6-like"/>
    <property type="match status" value="1"/>
</dbReference>
<dbReference type="PROSITE" id="PS51318">
    <property type="entry name" value="TAT"/>
    <property type="match status" value="1"/>
</dbReference>
<keyword id="KW-0003">3Fe-4S</keyword>
<keyword id="KW-0004">4Fe-4S</keyword>
<keyword id="KW-1003">Cell membrane</keyword>
<keyword id="KW-0408">Iron</keyword>
<keyword id="KW-0411">Iron-sulfur</keyword>
<keyword id="KW-0472">Membrane</keyword>
<keyword id="KW-0479">Metal-binding</keyword>
<keyword id="KW-0560">Oxidoreductase</keyword>
<keyword id="KW-0732">Signal</keyword>
<feature type="signal peptide" description="Tat-type signal" evidence="2">
    <location>
        <begin position="1"/>
        <end position="43"/>
    </location>
</feature>
<feature type="chain" id="PRO_0000013422" description="Uptake hydrogenase small subunit">
    <location>
        <begin position="44"/>
        <end position="363"/>
    </location>
</feature>
<feature type="binding site" evidence="1">
    <location>
        <position position="60"/>
    </location>
    <ligand>
        <name>[4Fe-4S] cluster</name>
        <dbReference type="ChEBI" id="CHEBI:49883"/>
        <label>1</label>
    </ligand>
</feature>
<feature type="binding site" evidence="1">
    <location>
        <position position="63"/>
    </location>
    <ligand>
        <name>[4Fe-4S] cluster</name>
        <dbReference type="ChEBI" id="CHEBI:49883"/>
        <label>1</label>
    </ligand>
</feature>
<feature type="binding site" evidence="1">
    <location>
        <position position="158"/>
    </location>
    <ligand>
        <name>[4Fe-4S] cluster</name>
        <dbReference type="ChEBI" id="CHEBI:49883"/>
        <label>1</label>
    </ligand>
</feature>
<feature type="binding site" evidence="1">
    <location>
        <position position="192"/>
    </location>
    <ligand>
        <name>[4Fe-4S] cluster</name>
        <dbReference type="ChEBI" id="CHEBI:49883"/>
        <label>1</label>
    </ligand>
</feature>
<feature type="binding site" evidence="1">
    <location>
        <position position="230"/>
    </location>
    <ligand>
        <name>[4Fe-4S] cluster</name>
        <dbReference type="ChEBI" id="CHEBI:49883"/>
        <label>2</label>
    </ligand>
</feature>
<feature type="binding site" evidence="1">
    <location>
        <position position="233"/>
    </location>
    <ligand>
        <name>[4Fe-4S] cluster</name>
        <dbReference type="ChEBI" id="CHEBI:49883"/>
        <label>2</label>
    </ligand>
</feature>
<feature type="binding site" evidence="1">
    <location>
        <position position="258"/>
    </location>
    <ligand>
        <name>[4Fe-4S] cluster</name>
        <dbReference type="ChEBI" id="CHEBI:49883"/>
        <label>2</label>
    </ligand>
</feature>
<feature type="binding site" evidence="1">
    <location>
        <position position="264"/>
    </location>
    <ligand>
        <name>[4Fe-4S] cluster</name>
        <dbReference type="ChEBI" id="CHEBI:49883"/>
        <label>2</label>
    </ligand>
</feature>
<feature type="binding site" evidence="1">
    <location>
        <position position="273"/>
    </location>
    <ligand>
        <name>[3Fe-4S] cluster</name>
        <dbReference type="ChEBI" id="CHEBI:21137"/>
    </ligand>
</feature>
<feature type="binding site" evidence="1">
    <location>
        <position position="292"/>
    </location>
    <ligand>
        <name>[3Fe-4S] cluster</name>
        <dbReference type="ChEBI" id="CHEBI:21137"/>
    </ligand>
</feature>
<feature type="binding site" evidence="1">
    <location>
        <position position="295"/>
    </location>
    <ligand>
        <name>[3Fe-4S] cluster</name>
        <dbReference type="ChEBI" id="CHEBI:21137"/>
    </ligand>
</feature>
<gene>
    <name type="primary">hupS</name>
</gene>
<organism>
    <name type="scientific">Alcaligenes hydrogenophilus</name>
    <dbReference type="NCBI Taxonomy" id="516"/>
    <lineage>
        <taxon>Bacteria</taxon>
        <taxon>Pseudomonadati</taxon>
        <taxon>Pseudomonadota</taxon>
        <taxon>Betaproteobacteria</taxon>
        <taxon>Burkholderiales</taxon>
        <taxon>Alcaligenaceae</taxon>
        <taxon>Alcaligenes</taxon>
    </lineage>
</organism>
<accession>P33375</accession>
<proteinExistence type="inferred from homology"/>
<evidence type="ECO:0000250" key="1">
    <source>
        <dbReference type="UniProtKB" id="P21853"/>
    </source>
</evidence>
<evidence type="ECO:0000255" key="2">
    <source>
        <dbReference type="PROSITE-ProRule" id="PRU00648"/>
    </source>
</evidence>
<evidence type="ECO:0000305" key="3"/>
<name>MBHS_ALCHY</name>
<reference key="1">
    <citation type="journal article" date="1992" name="Chem. Pharm. Bull.">
        <title>Nucleotide sequences of membrane-bound hydrogenase gene in Alcaligenes hydrogenophilus.</title>
        <authorList>
            <person name="Yagi K."/>
            <person name="Seto T."/>
            <person name="Terakado M."/>
            <person name="Umeda F."/>
            <person name="Doi T."/>
            <person name="Imanishi T."/>
            <person name="Miura Y."/>
        </authorList>
    </citation>
    <scope>NUCLEOTIDE SEQUENCE [GENOMIC DNA]</scope>
</reference>